<sequence>MRISIFGLGYVGAVCAGCLSGRGHEVVGVDISAAKIDMINQGKSPIVEPGLGELLAEGVKTGRLRGTTNVTEAVLATELSMLCVGTPSKLNGDLELDYIEEVCRQMGSALRDKTERHTVVVRSTVLPGTVHNVVIPILEEFSGKKAGVDFGVAVNPEFLRESTAIKDYNFPPMTVIGELDKASGRRLASIYAELDAPIVRKGIAVAEMIKYTCNVWHATKVTFANEIGNIAKAAGVDGREVMEVVCMDNKLNLSQYYMRPGLAFGGSCLPKDVSALSYRAHLWDIEAPLISSLMRSNAAQVQKAYDMIDKHGSRKVALLGLSFKAGTDDLRESPQLELAEMLIGKGFKLSIFDSNVEYARDHGANGHYIKNEIPHVSALLQSDLDKVVAEADVIVLGNADPRFEKLAKDVPAGKKVIDLVGFMPQRTAGAAEGICW</sequence>
<accession>P51585</accession>
<evidence type="ECO:0000250" key="1"/>
<evidence type="ECO:0000250" key="2">
    <source>
        <dbReference type="UniProtKB" id="P11759"/>
    </source>
</evidence>
<evidence type="ECO:0000305" key="3"/>
<reference key="1">
    <citation type="journal article" date="1996" name="J. Bacteriol.">
        <title>Characterization of the gene coding for GDP-mannose dehydrogenase (algD) from Azotobacter vinelandii.</title>
        <authorList>
            <person name="Campos M."/>
            <person name="Martinez-Salazar J.M."/>
            <person name="Lloret L."/>
            <person name="Moreno S."/>
            <person name="Nunez C."/>
            <person name="Espin G."/>
            <person name="Soberon-Chavez G."/>
        </authorList>
    </citation>
    <scope>NUCLEOTIDE SEQUENCE [GENOMIC DNA]</scope>
    <source>
        <strain>ATCC 9046</strain>
    </source>
</reference>
<dbReference type="EC" id="1.1.1.132"/>
<dbReference type="EMBL" id="U11240">
    <property type="protein sequence ID" value="AAB01487.1"/>
    <property type="molecule type" value="Unassigned_DNA"/>
</dbReference>
<dbReference type="SMR" id="P51585"/>
<dbReference type="UniPathway" id="UPA00286"/>
<dbReference type="GO" id="GO:0047919">
    <property type="term" value="F:GDP-mannose 6-dehydrogenase activity"/>
    <property type="evidence" value="ECO:0007669"/>
    <property type="project" value="UniProtKB-EC"/>
</dbReference>
<dbReference type="GO" id="GO:0051287">
    <property type="term" value="F:NAD binding"/>
    <property type="evidence" value="ECO:0007669"/>
    <property type="project" value="InterPro"/>
</dbReference>
<dbReference type="GO" id="GO:0042121">
    <property type="term" value="P:alginic acid biosynthetic process"/>
    <property type="evidence" value="ECO:0007669"/>
    <property type="project" value="UniProtKB-UniPathway"/>
</dbReference>
<dbReference type="Gene3D" id="1.20.5.170">
    <property type="match status" value="1"/>
</dbReference>
<dbReference type="Gene3D" id="3.40.50.720">
    <property type="entry name" value="NAD(P)-binding Rossmann-like Domain"/>
    <property type="match status" value="2"/>
</dbReference>
<dbReference type="InterPro" id="IPR008927">
    <property type="entry name" value="6-PGluconate_DH-like_C_sf"/>
</dbReference>
<dbReference type="InterPro" id="IPR028358">
    <property type="entry name" value="GDPman_DH"/>
</dbReference>
<dbReference type="InterPro" id="IPR036291">
    <property type="entry name" value="NAD(P)-bd_dom_sf"/>
</dbReference>
<dbReference type="InterPro" id="IPR017476">
    <property type="entry name" value="UDP-Glc/GDP-Man"/>
</dbReference>
<dbReference type="InterPro" id="IPR014027">
    <property type="entry name" value="UDP-Glc/GDP-Man_DH_C"/>
</dbReference>
<dbReference type="InterPro" id="IPR036220">
    <property type="entry name" value="UDP-Glc/GDP-Man_DH_C_sf"/>
</dbReference>
<dbReference type="InterPro" id="IPR014026">
    <property type="entry name" value="UDP-Glc/GDP-Man_DH_dimer"/>
</dbReference>
<dbReference type="InterPro" id="IPR001732">
    <property type="entry name" value="UDP-Glc/GDP-Man_DH_N"/>
</dbReference>
<dbReference type="NCBIfam" id="TIGR03026">
    <property type="entry name" value="NDP-sugDHase"/>
    <property type="match status" value="1"/>
</dbReference>
<dbReference type="PANTHER" id="PTHR43750:SF1">
    <property type="entry name" value="GDP-MANNOSE 6-DEHYDROGENASE"/>
    <property type="match status" value="1"/>
</dbReference>
<dbReference type="PANTHER" id="PTHR43750">
    <property type="entry name" value="UDP-GLUCOSE 6-DEHYDROGENASE TUAD"/>
    <property type="match status" value="1"/>
</dbReference>
<dbReference type="Pfam" id="PF00984">
    <property type="entry name" value="UDPG_MGDP_dh"/>
    <property type="match status" value="1"/>
</dbReference>
<dbReference type="Pfam" id="PF03720">
    <property type="entry name" value="UDPG_MGDP_dh_C"/>
    <property type="match status" value="1"/>
</dbReference>
<dbReference type="Pfam" id="PF03721">
    <property type="entry name" value="UDPG_MGDP_dh_N"/>
    <property type="match status" value="1"/>
</dbReference>
<dbReference type="PIRSF" id="PIRSF500135">
    <property type="entry name" value="GDPman_DH"/>
    <property type="match status" value="1"/>
</dbReference>
<dbReference type="PIRSF" id="PIRSF000124">
    <property type="entry name" value="UDPglc_GDPman_dh"/>
    <property type="match status" value="1"/>
</dbReference>
<dbReference type="SMART" id="SM00984">
    <property type="entry name" value="UDPG_MGDP_dh_C"/>
    <property type="match status" value="1"/>
</dbReference>
<dbReference type="SUPFAM" id="SSF48179">
    <property type="entry name" value="6-phosphogluconate dehydrogenase C-terminal domain-like"/>
    <property type="match status" value="1"/>
</dbReference>
<dbReference type="SUPFAM" id="SSF51735">
    <property type="entry name" value="NAD(P)-binding Rossmann-fold domains"/>
    <property type="match status" value="1"/>
</dbReference>
<dbReference type="SUPFAM" id="SSF52413">
    <property type="entry name" value="UDP-glucose/GDP-mannose dehydrogenase C-terminal domain"/>
    <property type="match status" value="1"/>
</dbReference>
<feature type="chain" id="PRO_0000074066" description="GDP-mannose 6-dehydrogenase">
    <location>
        <begin position="1"/>
        <end position="436"/>
    </location>
</feature>
<feature type="active site" evidence="1">
    <location>
        <position position="268"/>
    </location>
</feature>
<feature type="binding site" description="in chain A" evidence="2">
    <location>
        <position position="10"/>
    </location>
    <ligand>
        <name>NAD(+)</name>
        <dbReference type="ChEBI" id="CHEBI:57540"/>
        <note>ligand shared between homodimeric partners</note>
    </ligand>
</feature>
<feature type="binding site" description="in chain A" evidence="2">
    <location>
        <position position="11"/>
    </location>
    <ligand>
        <name>NAD(+)</name>
        <dbReference type="ChEBI" id="CHEBI:57540"/>
        <note>ligand shared between homodimeric partners</note>
    </ligand>
</feature>
<feature type="binding site" description="in chain A" evidence="2">
    <location>
        <position position="30"/>
    </location>
    <ligand>
        <name>NAD(+)</name>
        <dbReference type="ChEBI" id="CHEBI:57540"/>
        <note>ligand shared between homodimeric partners</note>
    </ligand>
</feature>
<feature type="binding site" description="in chain A" evidence="2">
    <location>
        <position position="35"/>
    </location>
    <ligand>
        <name>NAD(+)</name>
        <dbReference type="ChEBI" id="CHEBI:57540"/>
        <note>ligand shared between homodimeric partners</note>
    </ligand>
</feature>
<feature type="binding site" description="in chain A" evidence="2">
    <location>
        <position position="86"/>
    </location>
    <ligand>
        <name>NAD(+)</name>
        <dbReference type="ChEBI" id="CHEBI:57540"/>
        <note>ligand shared between homodimeric partners</note>
    </ligand>
</feature>
<feature type="binding site" description="in chain A" evidence="2">
    <location>
        <position position="124"/>
    </location>
    <ligand>
        <name>NAD(+)</name>
        <dbReference type="ChEBI" id="CHEBI:57540"/>
        <note>ligand shared between homodimeric partners</note>
    </ligand>
</feature>
<feature type="binding site" description="in chain A" evidence="2">
    <location>
        <position position="161"/>
    </location>
    <ligand>
        <name>GDP-alpha-D-mannuronate</name>
        <dbReference type="ChEBI" id="CHEBI:84886"/>
        <note>ligand shared between homodimeric partners</note>
    </ligand>
</feature>
<feature type="binding site" description="in chain A" evidence="2">
    <location>
        <position position="210"/>
    </location>
    <ligand>
        <name>GDP-alpha-D-mannuronate</name>
        <dbReference type="ChEBI" id="CHEBI:84886"/>
        <note>ligand shared between homodimeric partners</note>
    </ligand>
</feature>
<feature type="binding site" description="in chain A" evidence="2">
    <location>
        <position position="214"/>
    </location>
    <ligand>
        <name>GDP-alpha-D-mannuronate</name>
        <dbReference type="ChEBI" id="CHEBI:84886"/>
        <note>ligand shared between homodimeric partners</note>
    </ligand>
</feature>
<feature type="binding site" description="in chain A" evidence="2">
    <location>
        <position position="217"/>
    </location>
    <ligand>
        <name>GDP-alpha-D-mannuronate</name>
        <dbReference type="ChEBI" id="CHEBI:84886"/>
        <note>ligand shared between homodimeric partners</note>
    </ligand>
</feature>
<feature type="binding site" description="in chain A" evidence="2">
    <location>
        <position position="225"/>
    </location>
    <ligand>
        <name>GDP-alpha-D-mannuronate</name>
        <dbReference type="ChEBI" id="CHEBI:84886"/>
        <note>ligand shared between homodimeric partners</note>
    </ligand>
</feature>
<feature type="binding site" description="in chain B" evidence="2">
    <location>
        <position position="256"/>
    </location>
    <ligand>
        <name>GDP-alpha-D-mannuronate</name>
        <dbReference type="ChEBI" id="CHEBI:84886"/>
        <note>ligand shared between homodimeric partners</note>
    </ligand>
</feature>
<feature type="binding site" description="in chain B" evidence="2">
    <location>
        <position position="257"/>
    </location>
    <ligand>
        <name>GDP-alpha-D-mannuronate</name>
        <dbReference type="ChEBI" id="CHEBI:84886"/>
        <note>ligand shared between homodimeric partners</note>
    </ligand>
</feature>
<feature type="binding site" description="in chain B" evidence="2">
    <location>
        <position position="259"/>
    </location>
    <ligand>
        <name>GDP-alpha-D-mannuronate</name>
        <dbReference type="ChEBI" id="CHEBI:84886"/>
        <note>ligand shared between homodimeric partners</note>
    </ligand>
</feature>
<feature type="binding site" description="in chain B" evidence="2">
    <location>
        <position position="265"/>
    </location>
    <ligand>
        <name>GDP-alpha-D-mannuronate</name>
        <dbReference type="ChEBI" id="CHEBI:84886"/>
        <note>ligand shared between homodimeric partners</note>
    </ligand>
</feature>
<feature type="binding site" description="in chain B" evidence="2">
    <location>
        <position position="271"/>
    </location>
    <ligand>
        <name>NAD(+)</name>
        <dbReference type="ChEBI" id="CHEBI:57540"/>
        <note>ligand shared between homodimeric partners</note>
    </ligand>
</feature>
<feature type="binding site" description="in chain B" evidence="2">
    <location>
        <position position="324"/>
    </location>
    <ligand>
        <name>GDP-alpha-D-mannuronate</name>
        <dbReference type="ChEBI" id="CHEBI:84886"/>
        <note>ligand shared between homodimeric partners</note>
    </ligand>
</feature>
<feature type="binding site" description="in chain B" evidence="2">
    <location>
        <position position="331"/>
    </location>
    <ligand>
        <name>NAD(+)</name>
        <dbReference type="ChEBI" id="CHEBI:57540"/>
        <note>ligand shared between homodimeric partners</note>
    </ligand>
</feature>
<comment type="function">
    <text>Catalyzes the oxidation of guanosine diphospho-D-mannose (GDP-D-mannose) to GDP-D-mannuronic acid, a precursor for alginate polymerization. The alginate layer causes a mucoid phenotype and is essential for cyst formation.</text>
</comment>
<comment type="catalytic activity">
    <reaction>
        <text>GDP-alpha-D-mannose + 2 NAD(+) + H2O = GDP-alpha-D-mannuronate + 2 NADH + 3 H(+)</text>
        <dbReference type="Rhea" id="RHEA:21728"/>
        <dbReference type="ChEBI" id="CHEBI:15377"/>
        <dbReference type="ChEBI" id="CHEBI:15378"/>
        <dbReference type="ChEBI" id="CHEBI:57527"/>
        <dbReference type="ChEBI" id="CHEBI:57540"/>
        <dbReference type="ChEBI" id="CHEBI:57945"/>
        <dbReference type="ChEBI" id="CHEBI:84886"/>
        <dbReference type="EC" id="1.1.1.132"/>
    </reaction>
</comment>
<comment type="pathway">
    <text>Glycan biosynthesis; alginate biosynthesis.</text>
</comment>
<comment type="similarity">
    <text evidence="3">Belongs to the UDP-glucose/GDP-mannose dehydrogenase family.</text>
</comment>
<organism>
    <name type="scientific">Azotobacter vinelandii</name>
    <dbReference type="NCBI Taxonomy" id="354"/>
    <lineage>
        <taxon>Bacteria</taxon>
        <taxon>Pseudomonadati</taxon>
        <taxon>Pseudomonadota</taxon>
        <taxon>Gammaproteobacteria</taxon>
        <taxon>Pseudomonadales</taxon>
        <taxon>Pseudomonadaceae</taxon>
        <taxon>Azotobacter</taxon>
    </lineage>
</organism>
<gene>
    <name type="primary">algD</name>
</gene>
<proteinExistence type="inferred from homology"/>
<keyword id="KW-0016">Alginate biosynthesis</keyword>
<keyword id="KW-0520">NAD</keyword>
<keyword id="KW-0560">Oxidoreductase</keyword>
<name>ALGD_AZOVI</name>
<protein>
    <recommendedName>
        <fullName>GDP-mannose 6-dehydrogenase</fullName>
        <shortName>GMD</shortName>
        <ecNumber>1.1.1.132</ecNumber>
    </recommendedName>
</protein>